<keyword id="KW-0414">Isoprene biosynthesis</keyword>
<keyword id="KW-0548">Nucleotidyltransferase</keyword>
<keyword id="KW-0808">Transferase</keyword>
<name>ISPD_CUPPJ</name>
<dbReference type="EC" id="2.7.7.60" evidence="1"/>
<dbReference type="EMBL" id="CP000090">
    <property type="protein sequence ID" value="AAZ60731.1"/>
    <property type="status" value="ALT_INIT"/>
    <property type="molecule type" value="Genomic_DNA"/>
</dbReference>
<dbReference type="SMR" id="Q472F2"/>
<dbReference type="STRING" id="264198.Reut_A1361"/>
<dbReference type="KEGG" id="reu:Reut_A1361"/>
<dbReference type="eggNOG" id="COG1211">
    <property type="taxonomic scope" value="Bacteria"/>
</dbReference>
<dbReference type="HOGENOM" id="CLU_061281_3_0_4"/>
<dbReference type="UniPathway" id="UPA00056">
    <property type="reaction ID" value="UER00093"/>
</dbReference>
<dbReference type="GO" id="GO:0050518">
    <property type="term" value="F:2-C-methyl-D-erythritol 4-phosphate cytidylyltransferase activity"/>
    <property type="evidence" value="ECO:0007669"/>
    <property type="project" value="UniProtKB-UniRule"/>
</dbReference>
<dbReference type="GO" id="GO:0019288">
    <property type="term" value="P:isopentenyl diphosphate biosynthetic process, methylerythritol 4-phosphate pathway"/>
    <property type="evidence" value="ECO:0007669"/>
    <property type="project" value="UniProtKB-UniRule"/>
</dbReference>
<dbReference type="CDD" id="cd02516">
    <property type="entry name" value="CDP-ME_synthetase"/>
    <property type="match status" value="1"/>
</dbReference>
<dbReference type="FunFam" id="3.90.550.10:FF:000003">
    <property type="entry name" value="2-C-methyl-D-erythritol 4-phosphate cytidylyltransferase"/>
    <property type="match status" value="1"/>
</dbReference>
<dbReference type="Gene3D" id="3.90.550.10">
    <property type="entry name" value="Spore Coat Polysaccharide Biosynthesis Protein SpsA, Chain A"/>
    <property type="match status" value="1"/>
</dbReference>
<dbReference type="HAMAP" id="MF_00108">
    <property type="entry name" value="IspD"/>
    <property type="match status" value="1"/>
</dbReference>
<dbReference type="InterPro" id="IPR001228">
    <property type="entry name" value="IspD"/>
</dbReference>
<dbReference type="InterPro" id="IPR034683">
    <property type="entry name" value="IspD/TarI"/>
</dbReference>
<dbReference type="InterPro" id="IPR050088">
    <property type="entry name" value="IspD/TarI_cytidylyltransf_bact"/>
</dbReference>
<dbReference type="InterPro" id="IPR018294">
    <property type="entry name" value="ISPD_synthase_CS"/>
</dbReference>
<dbReference type="InterPro" id="IPR029044">
    <property type="entry name" value="Nucleotide-diphossugar_trans"/>
</dbReference>
<dbReference type="NCBIfam" id="TIGR00453">
    <property type="entry name" value="ispD"/>
    <property type="match status" value="1"/>
</dbReference>
<dbReference type="PANTHER" id="PTHR32125">
    <property type="entry name" value="2-C-METHYL-D-ERYTHRITOL 4-PHOSPHATE CYTIDYLYLTRANSFERASE, CHLOROPLASTIC"/>
    <property type="match status" value="1"/>
</dbReference>
<dbReference type="PANTHER" id="PTHR32125:SF4">
    <property type="entry name" value="2-C-METHYL-D-ERYTHRITOL 4-PHOSPHATE CYTIDYLYLTRANSFERASE, CHLOROPLASTIC"/>
    <property type="match status" value="1"/>
</dbReference>
<dbReference type="Pfam" id="PF01128">
    <property type="entry name" value="IspD"/>
    <property type="match status" value="1"/>
</dbReference>
<dbReference type="SUPFAM" id="SSF53448">
    <property type="entry name" value="Nucleotide-diphospho-sugar transferases"/>
    <property type="match status" value="1"/>
</dbReference>
<dbReference type="PROSITE" id="PS01295">
    <property type="entry name" value="ISPD"/>
    <property type="match status" value="1"/>
</dbReference>
<accession>Q472F2</accession>
<organism>
    <name type="scientific">Cupriavidus pinatubonensis (strain JMP 134 / LMG 1197)</name>
    <name type="common">Cupriavidus necator (strain JMP 134)</name>
    <dbReference type="NCBI Taxonomy" id="264198"/>
    <lineage>
        <taxon>Bacteria</taxon>
        <taxon>Pseudomonadati</taxon>
        <taxon>Pseudomonadota</taxon>
        <taxon>Betaproteobacteria</taxon>
        <taxon>Burkholderiales</taxon>
        <taxon>Burkholderiaceae</taxon>
        <taxon>Cupriavidus</taxon>
    </lineage>
</organism>
<proteinExistence type="inferred from homology"/>
<reference key="1">
    <citation type="journal article" date="2010" name="PLoS ONE">
        <title>The complete multipartite genome sequence of Cupriavidus necator JMP134, a versatile pollutant degrader.</title>
        <authorList>
            <person name="Lykidis A."/>
            <person name="Perez-Pantoja D."/>
            <person name="Ledger T."/>
            <person name="Mavromatis K."/>
            <person name="Anderson I.J."/>
            <person name="Ivanova N.N."/>
            <person name="Hooper S.D."/>
            <person name="Lapidus A."/>
            <person name="Lucas S."/>
            <person name="Gonzalez B."/>
            <person name="Kyrpides N.C."/>
        </authorList>
    </citation>
    <scope>NUCLEOTIDE SEQUENCE [LARGE SCALE GENOMIC DNA]</scope>
    <source>
        <strain>JMP134 / LMG 1197</strain>
    </source>
</reference>
<sequence>MSDRRFALIPCAGTGSRAGGSVPKQYQPVAGRPMIWYALAAFSACDAISATALVLAPDDMPLESRFGADIFAGLRFDTAFVGGDTRHASVLAGLHHLAQLGATDTDWVLVHDAARPGLTPAMIHNLVRAVESDNDDDPDAAIGGILAVPVPDTLKRADAGERIGTTVPRDGLWQAQTPQMFRVGVLRQALQDALAAGAVVTDEASAIERLGLHPRLVNGSLRNFKVTYPEDFALAEVLLGTGPARSADSGA</sequence>
<gene>
    <name evidence="1" type="primary">ispD</name>
    <name type="ordered locus">Reut_A1361</name>
</gene>
<comment type="function">
    <text evidence="1">Catalyzes the formation of 4-diphosphocytidyl-2-C-methyl-D-erythritol from CTP and 2-C-methyl-D-erythritol 4-phosphate (MEP).</text>
</comment>
<comment type="catalytic activity">
    <reaction evidence="1">
        <text>2-C-methyl-D-erythritol 4-phosphate + CTP + H(+) = 4-CDP-2-C-methyl-D-erythritol + diphosphate</text>
        <dbReference type="Rhea" id="RHEA:13429"/>
        <dbReference type="ChEBI" id="CHEBI:15378"/>
        <dbReference type="ChEBI" id="CHEBI:33019"/>
        <dbReference type="ChEBI" id="CHEBI:37563"/>
        <dbReference type="ChEBI" id="CHEBI:57823"/>
        <dbReference type="ChEBI" id="CHEBI:58262"/>
        <dbReference type="EC" id="2.7.7.60"/>
    </reaction>
</comment>
<comment type="pathway">
    <text evidence="1">Isoprenoid biosynthesis; isopentenyl diphosphate biosynthesis via DXP pathway; isopentenyl diphosphate from 1-deoxy-D-xylulose 5-phosphate: step 2/6.</text>
</comment>
<comment type="similarity">
    <text evidence="1">Belongs to the IspD/TarI cytidylyltransferase family. IspD subfamily.</text>
</comment>
<comment type="sequence caution" evidence="2">
    <conflict type="erroneous initiation">
        <sequence resource="EMBL-CDS" id="AAZ60731"/>
    </conflict>
</comment>
<protein>
    <recommendedName>
        <fullName evidence="1">2-C-methyl-D-erythritol 4-phosphate cytidylyltransferase</fullName>
        <ecNumber evidence="1">2.7.7.60</ecNumber>
    </recommendedName>
    <alternativeName>
        <fullName evidence="1">4-diphosphocytidyl-2C-methyl-D-erythritol synthase</fullName>
    </alternativeName>
    <alternativeName>
        <fullName evidence="1">MEP cytidylyltransferase</fullName>
        <shortName evidence="1">MCT</shortName>
    </alternativeName>
</protein>
<evidence type="ECO:0000255" key="1">
    <source>
        <dbReference type="HAMAP-Rule" id="MF_00108"/>
    </source>
</evidence>
<evidence type="ECO:0000305" key="2"/>
<feature type="chain" id="PRO_0000237814" description="2-C-methyl-D-erythritol 4-phosphate cytidylyltransferase">
    <location>
        <begin position="1"/>
        <end position="251"/>
    </location>
</feature>
<feature type="site" description="Transition state stabilizer" evidence="1">
    <location>
        <position position="17"/>
    </location>
</feature>
<feature type="site" description="Transition state stabilizer" evidence="1">
    <location>
        <position position="24"/>
    </location>
</feature>
<feature type="site" description="Positions MEP for the nucleophilic attack" evidence="1">
    <location>
        <position position="169"/>
    </location>
</feature>
<feature type="site" description="Positions MEP for the nucleophilic attack" evidence="1">
    <location>
        <position position="225"/>
    </location>
</feature>